<keyword id="KW-0240">DNA-directed RNA polymerase</keyword>
<keyword id="KW-0548">Nucleotidyltransferase</keyword>
<keyword id="KW-1185">Reference proteome</keyword>
<keyword id="KW-0804">Transcription</keyword>
<keyword id="KW-0808">Transferase</keyword>
<organism>
    <name type="scientific">Dichelobacter nodosus (strain VCS1703A)</name>
    <dbReference type="NCBI Taxonomy" id="246195"/>
    <lineage>
        <taxon>Bacteria</taxon>
        <taxon>Pseudomonadati</taxon>
        <taxon>Pseudomonadota</taxon>
        <taxon>Gammaproteobacteria</taxon>
        <taxon>Cardiobacteriales</taxon>
        <taxon>Cardiobacteriaceae</taxon>
        <taxon>Dichelobacter</taxon>
    </lineage>
</organism>
<feature type="chain" id="PRO_1000005921" description="DNA-directed RNA polymerase subunit omega">
    <location>
        <begin position="1"/>
        <end position="77"/>
    </location>
</feature>
<sequence length="77" mass="8540">MARVTVEDCLIHENSRFRLVLAASKRARQLTLGHQPLVAPENDKPTVLALREIEEGKVTVQGLLDGQDVSEHLARQA</sequence>
<dbReference type="EC" id="2.7.7.6" evidence="1"/>
<dbReference type="EMBL" id="CP000513">
    <property type="protein sequence ID" value="ABQ13914.1"/>
    <property type="molecule type" value="Genomic_DNA"/>
</dbReference>
<dbReference type="RefSeq" id="WP_012031333.1">
    <property type="nucleotide sequence ID" value="NC_009446.1"/>
</dbReference>
<dbReference type="SMR" id="A5EXW8"/>
<dbReference type="STRING" id="246195.DNO_1021"/>
<dbReference type="KEGG" id="dno:DNO_1021"/>
<dbReference type="eggNOG" id="COG1758">
    <property type="taxonomic scope" value="Bacteria"/>
</dbReference>
<dbReference type="HOGENOM" id="CLU_125406_5_3_6"/>
<dbReference type="OrthoDB" id="9796300at2"/>
<dbReference type="Proteomes" id="UP000000248">
    <property type="component" value="Chromosome"/>
</dbReference>
<dbReference type="GO" id="GO:0000428">
    <property type="term" value="C:DNA-directed RNA polymerase complex"/>
    <property type="evidence" value="ECO:0007669"/>
    <property type="project" value="UniProtKB-KW"/>
</dbReference>
<dbReference type="GO" id="GO:0003677">
    <property type="term" value="F:DNA binding"/>
    <property type="evidence" value="ECO:0007669"/>
    <property type="project" value="UniProtKB-UniRule"/>
</dbReference>
<dbReference type="GO" id="GO:0003899">
    <property type="term" value="F:DNA-directed RNA polymerase activity"/>
    <property type="evidence" value="ECO:0007669"/>
    <property type="project" value="UniProtKB-UniRule"/>
</dbReference>
<dbReference type="GO" id="GO:0006351">
    <property type="term" value="P:DNA-templated transcription"/>
    <property type="evidence" value="ECO:0007669"/>
    <property type="project" value="UniProtKB-UniRule"/>
</dbReference>
<dbReference type="Gene3D" id="3.90.940.10">
    <property type="match status" value="1"/>
</dbReference>
<dbReference type="HAMAP" id="MF_00366">
    <property type="entry name" value="RNApol_bact_RpoZ"/>
    <property type="match status" value="1"/>
</dbReference>
<dbReference type="InterPro" id="IPR003716">
    <property type="entry name" value="DNA-dir_RNA_pol_omega"/>
</dbReference>
<dbReference type="InterPro" id="IPR006110">
    <property type="entry name" value="Pol_omega/Rpo6/RPB6"/>
</dbReference>
<dbReference type="InterPro" id="IPR036161">
    <property type="entry name" value="RPB6/omega-like_sf"/>
</dbReference>
<dbReference type="NCBIfam" id="TIGR00690">
    <property type="entry name" value="rpoZ"/>
    <property type="match status" value="1"/>
</dbReference>
<dbReference type="PANTHER" id="PTHR34476">
    <property type="entry name" value="DNA-DIRECTED RNA POLYMERASE SUBUNIT OMEGA"/>
    <property type="match status" value="1"/>
</dbReference>
<dbReference type="PANTHER" id="PTHR34476:SF1">
    <property type="entry name" value="DNA-DIRECTED RNA POLYMERASE SUBUNIT OMEGA"/>
    <property type="match status" value="1"/>
</dbReference>
<dbReference type="Pfam" id="PF01192">
    <property type="entry name" value="RNA_pol_Rpb6"/>
    <property type="match status" value="1"/>
</dbReference>
<dbReference type="SMART" id="SM01409">
    <property type="entry name" value="RNA_pol_Rpb6"/>
    <property type="match status" value="1"/>
</dbReference>
<dbReference type="SUPFAM" id="SSF63562">
    <property type="entry name" value="RPB6/omega subunit-like"/>
    <property type="match status" value="1"/>
</dbReference>
<protein>
    <recommendedName>
        <fullName evidence="1">DNA-directed RNA polymerase subunit omega</fullName>
        <shortName evidence="1">RNAP omega subunit</shortName>
        <ecNumber evidence="1">2.7.7.6</ecNumber>
    </recommendedName>
    <alternativeName>
        <fullName evidence="1">RNA polymerase omega subunit</fullName>
    </alternativeName>
    <alternativeName>
        <fullName evidence="1">Transcriptase subunit omega</fullName>
    </alternativeName>
</protein>
<accession>A5EXW8</accession>
<evidence type="ECO:0000255" key="1">
    <source>
        <dbReference type="HAMAP-Rule" id="MF_00366"/>
    </source>
</evidence>
<name>RPOZ_DICNV</name>
<comment type="function">
    <text evidence="1">Promotes RNA polymerase assembly. Latches the N- and C-terminal regions of the beta' subunit thereby facilitating its interaction with the beta and alpha subunits.</text>
</comment>
<comment type="catalytic activity">
    <reaction evidence="1">
        <text>RNA(n) + a ribonucleoside 5'-triphosphate = RNA(n+1) + diphosphate</text>
        <dbReference type="Rhea" id="RHEA:21248"/>
        <dbReference type="Rhea" id="RHEA-COMP:14527"/>
        <dbReference type="Rhea" id="RHEA-COMP:17342"/>
        <dbReference type="ChEBI" id="CHEBI:33019"/>
        <dbReference type="ChEBI" id="CHEBI:61557"/>
        <dbReference type="ChEBI" id="CHEBI:140395"/>
        <dbReference type="EC" id="2.7.7.6"/>
    </reaction>
</comment>
<comment type="subunit">
    <text evidence="1">The RNAP catalytic core consists of 2 alpha, 1 beta, 1 beta' and 1 omega subunit. When a sigma factor is associated with the core the holoenzyme is formed, which can initiate transcription.</text>
</comment>
<comment type="similarity">
    <text evidence="1">Belongs to the RNA polymerase subunit omega family.</text>
</comment>
<proteinExistence type="inferred from homology"/>
<reference key="1">
    <citation type="journal article" date="2007" name="Nat. Biotechnol.">
        <title>Genome sequence and identification of candidate vaccine antigens from the animal pathogen Dichelobacter nodosus.</title>
        <authorList>
            <person name="Myers G.S.A."/>
            <person name="Parker D."/>
            <person name="Al-Hasani K."/>
            <person name="Kennan R.M."/>
            <person name="Seemann T."/>
            <person name="Ren Q."/>
            <person name="Badger J.H."/>
            <person name="Selengut J.D."/>
            <person name="Deboy R.T."/>
            <person name="Tettelin H."/>
            <person name="Boyce J.D."/>
            <person name="McCarl V.P."/>
            <person name="Han X."/>
            <person name="Nelson W.C."/>
            <person name="Madupu R."/>
            <person name="Mohamoud Y."/>
            <person name="Holley T."/>
            <person name="Fedorova N."/>
            <person name="Khouri H."/>
            <person name="Bottomley S.P."/>
            <person name="Whittington R.J."/>
            <person name="Adler B."/>
            <person name="Songer J.G."/>
            <person name="Rood J.I."/>
            <person name="Paulsen I.T."/>
        </authorList>
    </citation>
    <scope>NUCLEOTIDE SEQUENCE [LARGE SCALE GENOMIC DNA]</scope>
    <source>
        <strain>VCS1703A</strain>
    </source>
</reference>
<gene>
    <name evidence="1" type="primary">rpoZ</name>
    <name type="ordered locus">DNO_1021</name>
</gene>